<gene>
    <name type="ordered locus">CGSHiEE_06715</name>
</gene>
<feature type="chain" id="PRO_0000388882" description="UPF0756 membrane protein CGSHiEE_06715">
    <location>
        <begin position="1"/>
        <end position="150"/>
    </location>
</feature>
<feature type="transmembrane region" description="Helical" evidence="1">
    <location>
        <begin position="1"/>
        <end position="21"/>
    </location>
</feature>
<feature type="transmembrane region" description="Helical" evidence="1">
    <location>
        <begin position="52"/>
        <end position="72"/>
    </location>
</feature>
<feature type="transmembrane region" description="Helical" evidence="1">
    <location>
        <begin position="81"/>
        <end position="101"/>
    </location>
</feature>
<feature type="transmembrane region" description="Helical" evidence="1">
    <location>
        <begin position="123"/>
        <end position="143"/>
    </location>
</feature>
<name>Y6715_HAEIE</name>
<comment type="subcellular location">
    <subcellularLocation>
        <location evidence="1">Cell membrane</location>
        <topology evidence="1">Multi-pass membrane protein</topology>
    </subcellularLocation>
</comment>
<comment type="similarity">
    <text evidence="1">Belongs to the UPF0756 family.</text>
</comment>
<organism>
    <name type="scientific">Haemophilus influenzae (strain PittEE)</name>
    <dbReference type="NCBI Taxonomy" id="374930"/>
    <lineage>
        <taxon>Bacteria</taxon>
        <taxon>Pseudomonadati</taxon>
        <taxon>Pseudomonadota</taxon>
        <taxon>Gammaproteobacteria</taxon>
        <taxon>Pasteurellales</taxon>
        <taxon>Pasteurellaceae</taxon>
        <taxon>Haemophilus</taxon>
    </lineage>
</organism>
<protein>
    <recommendedName>
        <fullName evidence="1">UPF0756 membrane protein CGSHiEE_06715</fullName>
    </recommendedName>
</protein>
<proteinExistence type="inferred from homology"/>
<evidence type="ECO:0000255" key="1">
    <source>
        <dbReference type="HAMAP-Rule" id="MF_01874"/>
    </source>
</evidence>
<keyword id="KW-1003">Cell membrane</keyword>
<keyword id="KW-0472">Membrane</keyword>
<keyword id="KW-0812">Transmembrane</keyword>
<keyword id="KW-1133">Transmembrane helix</keyword>
<sequence length="150" mass="15498">MTLQLNTIALLLVILLILGVLSNNSTITISAAVLLIMQQTFLSSHIPLLEKYGVKIGIIILTIGVLSPLVSGKIQLPNLSGFVSWKMALSISVGVLVAWLAGKGVPLMGEQPILVTGLLIGTIIGVAFLGGIPVGPLIAAGILALFLGKI</sequence>
<accession>A5UD33</accession>
<dbReference type="EMBL" id="CP000671">
    <property type="protein sequence ID" value="ABQ98684.1"/>
    <property type="molecule type" value="Genomic_DNA"/>
</dbReference>
<dbReference type="KEGG" id="hip:CGSHiEE_06715"/>
<dbReference type="HOGENOM" id="CLU_125889_0_0_6"/>
<dbReference type="GO" id="GO:0005886">
    <property type="term" value="C:plasma membrane"/>
    <property type="evidence" value="ECO:0007669"/>
    <property type="project" value="UniProtKB-SubCell"/>
</dbReference>
<dbReference type="HAMAP" id="MF_01874">
    <property type="entry name" value="UPF0756"/>
    <property type="match status" value="1"/>
</dbReference>
<dbReference type="InterPro" id="IPR007382">
    <property type="entry name" value="UPF0756_TM"/>
</dbReference>
<dbReference type="PANTHER" id="PTHR38452">
    <property type="entry name" value="UPF0756 MEMBRANE PROTEIN YEAL"/>
    <property type="match status" value="1"/>
</dbReference>
<dbReference type="PANTHER" id="PTHR38452:SF1">
    <property type="entry name" value="UPF0756 MEMBRANE PROTEIN YEAL"/>
    <property type="match status" value="1"/>
</dbReference>
<dbReference type="Pfam" id="PF04284">
    <property type="entry name" value="DUF441"/>
    <property type="match status" value="1"/>
</dbReference>
<reference key="1">
    <citation type="journal article" date="2007" name="Genome Biol.">
        <title>Characterization and modeling of the Haemophilus influenzae core and supragenomes based on the complete genomic sequences of Rd and 12 clinical nontypeable strains.</title>
        <authorList>
            <person name="Hogg J.S."/>
            <person name="Hu F.Z."/>
            <person name="Janto B."/>
            <person name="Boissy R."/>
            <person name="Hayes J."/>
            <person name="Keefe R."/>
            <person name="Post J.C."/>
            <person name="Ehrlich G.D."/>
        </authorList>
    </citation>
    <scope>NUCLEOTIDE SEQUENCE [LARGE SCALE GENOMIC DNA]</scope>
    <source>
        <strain>PittEE</strain>
    </source>
</reference>